<protein>
    <recommendedName>
        <fullName evidence="1">Large ribosomal subunit protein bL17</fullName>
    </recommendedName>
    <alternativeName>
        <fullName evidence="2">50S ribosomal protein L17</fullName>
    </alternativeName>
</protein>
<evidence type="ECO:0000255" key="1">
    <source>
        <dbReference type="HAMAP-Rule" id="MF_01368"/>
    </source>
</evidence>
<evidence type="ECO:0000305" key="2"/>
<keyword id="KW-1185">Reference proteome</keyword>
<keyword id="KW-0687">Ribonucleoprotein</keyword>
<keyword id="KW-0689">Ribosomal protein</keyword>
<proteinExistence type="inferred from homology"/>
<name>RL17_SHEPA</name>
<reference key="1">
    <citation type="submission" date="2007-10" db="EMBL/GenBank/DDBJ databases">
        <title>Complete sequence of Shewanella pealeana ATCC 700345.</title>
        <authorList>
            <consortium name="US DOE Joint Genome Institute"/>
            <person name="Copeland A."/>
            <person name="Lucas S."/>
            <person name="Lapidus A."/>
            <person name="Barry K."/>
            <person name="Glavina del Rio T."/>
            <person name="Dalin E."/>
            <person name="Tice H."/>
            <person name="Pitluck S."/>
            <person name="Chertkov O."/>
            <person name="Brettin T."/>
            <person name="Bruce D."/>
            <person name="Detter J.C."/>
            <person name="Han C."/>
            <person name="Schmutz J."/>
            <person name="Larimer F."/>
            <person name="Land M."/>
            <person name="Hauser L."/>
            <person name="Kyrpides N."/>
            <person name="Kim E."/>
            <person name="Zhao J.-S.Z."/>
            <person name="Manno D."/>
            <person name="Hawari J."/>
            <person name="Richardson P."/>
        </authorList>
    </citation>
    <scope>NUCLEOTIDE SEQUENCE [LARGE SCALE GENOMIC DNA]</scope>
    <source>
        <strain>ATCC 700345 / ANG-SQ1</strain>
    </source>
</reference>
<organism>
    <name type="scientific">Shewanella pealeana (strain ATCC 700345 / ANG-SQ1)</name>
    <dbReference type="NCBI Taxonomy" id="398579"/>
    <lineage>
        <taxon>Bacteria</taxon>
        <taxon>Pseudomonadati</taxon>
        <taxon>Pseudomonadota</taxon>
        <taxon>Gammaproteobacteria</taxon>
        <taxon>Alteromonadales</taxon>
        <taxon>Shewanellaceae</taxon>
        <taxon>Shewanella</taxon>
    </lineage>
</organism>
<dbReference type="EMBL" id="CP000851">
    <property type="protein sequence ID" value="ABV85538.1"/>
    <property type="molecule type" value="Genomic_DNA"/>
</dbReference>
<dbReference type="RefSeq" id="WP_012153479.1">
    <property type="nucleotide sequence ID" value="NC_009901.1"/>
</dbReference>
<dbReference type="SMR" id="A8GZ01"/>
<dbReference type="STRING" id="398579.Spea_0210"/>
<dbReference type="KEGG" id="spl:Spea_0210"/>
<dbReference type="eggNOG" id="COG0203">
    <property type="taxonomic scope" value="Bacteria"/>
</dbReference>
<dbReference type="HOGENOM" id="CLU_074407_2_0_6"/>
<dbReference type="OrthoDB" id="9809073at2"/>
<dbReference type="Proteomes" id="UP000002608">
    <property type="component" value="Chromosome"/>
</dbReference>
<dbReference type="GO" id="GO:0022625">
    <property type="term" value="C:cytosolic large ribosomal subunit"/>
    <property type="evidence" value="ECO:0007669"/>
    <property type="project" value="TreeGrafter"/>
</dbReference>
<dbReference type="GO" id="GO:0003735">
    <property type="term" value="F:structural constituent of ribosome"/>
    <property type="evidence" value="ECO:0007669"/>
    <property type="project" value="InterPro"/>
</dbReference>
<dbReference type="GO" id="GO:0006412">
    <property type="term" value="P:translation"/>
    <property type="evidence" value="ECO:0007669"/>
    <property type="project" value="UniProtKB-UniRule"/>
</dbReference>
<dbReference type="FunFam" id="3.90.1030.10:FF:000001">
    <property type="entry name" value="50S ribosomal protein L17"/>
    <property type="match status" value="1"/>
</dbReference>
<dbReference type="Gene3D" id="3.90.1030.10">
    <property type="entry name" value="Ribosomal protein L17"/>
    <property type="match status" value="1"/>
</dbReference>
<dbReference type="HAMAP" id="MF_01368">
    <property type="entry name" value="Ribosomal_bL17"/>
    <property type="match status" value="1"/>
</dbReference>
<dbReference type="InterPro" id="IPR000456">
    <property type="entry name" value="Ribosomal_bL17"/>
</dbReference>
<dbReference type="InterPro" id="IPR047859">
    <property type="entry name" value="Ribosomal_bL17_CS"/>
</dbReference>
<dbReference type="InterPro" id="IPR036373">
    <property type="entry name" value="Ribosomal_bL17_sf"/>
</dbReference>
<dbReference type="NCBIfam" id="TIGR00059">
    <property type="entry name" value="L17"/>
    <property type="match status" value="1"/>
</dbReference>
<dbReference type="PANTHER" id="PTHR14413:SF16">
    <property type="entry name" value="LARGE RIBOSOMAL SUBUNIT PROTEIN BL17M"/>
    <property type="match status" value="1"/>
</dbReference>
<dbReference type="PANTHER" id="PTHR14413">
    <property type="entry name" value="RIBOSOMAL PROTEIN L17"/>
    <property type="match status" value="1"/>
</dbReference>
<dbReference type="Pfam" id="PF01196">
    <property type="entry name" value="Ribosomal_L17"/>
    <property type="match status" value="1"/>
</dbReference>
<dbReference type="SUPFAM" id="SSF64263">
    <property type="entry name" value="Prokaryotic ribosomal protein L17"/>
    <property type="match status" value="1"/>
</dbReference>
<dbReference type="PROSITE" id="PS01167">
    <property type="entry name" value="RIBOSOMAL_L17"/>
    <property type="match status" value="1"/>
</dbReference>
<sequence>MRHRKSGRQLNRNSSHRQAMFRNMACSIVRHEVIKTTVAKAKELRRVVEPLITLAKSDSVANRRLAFARTRDAEVVGKLFTELGPRFQERPGGYTRILKCGLRTGDKAPMAYIELVGRPEAAEAVEDTAE</sequence>
<accession>A8GZ01</accession>
<comment type="subunit">
    <text evidence="1">Part of the 50S ribosomal subunit. Contacts protein L32.</text>
</comment>
<comment type="similarity">
    <text evidence="1">Belongs to the bacterial ribosomal protein bL17 family.</text>
</comment>
<feature type="chain" id="PRO_1000087194" description="Large ribosomal subunit protein bL17">
    <location>
        <begin position="1"/>
        <end position="130"/>
    </location>
</feature>
<gene>
    <name evidence="1" type="primary">rplQ</name>
    <name type="ordered locus">Spea_0210</name>
</gene>